<feature type="chain" id="PRO_1000189475" description="Tyrosine--tRNA ligase">
    <location>
        <begin position="1"/>
        <end position="327"/>
    </location>
</feature>
<feature type="short sequence motif" description="'HIGH' region">
    <location>
        <begin position="38"/>
        <end position="46"/>
    </location>
</feature>
<feature type="short sequence motif" description="'KMSKS' region">
    <location>
        <begin position="212"/>
        <end position="216"/>
    </location>
</feature>
<feature type="binding site" evidence="1">
    <location>
        <position position="33"/>
    </location>
    <ligand>
        <name>L-tyrosine</name>
        <dbReference type="ChEBI" id="CHEBI:58315"/>
    </ligand>
</feature>
<feature type="binding site" evidence="1">
    <location>
        <position position="154"/>
    </location>
    <ligand>
        <name>L-tyrosine</name>
        <dbReference type="ChEBI" id="CHEBI:58315"/>
    </ligand>
</feature>
<feature type="binding site" evidence="1">
    <location>
        <position position="158"/>
    </location>
    <ligand>
        <name>L-tyrosine</name>
        <dbReference type="ChEBI" id="CHEBI:58315"/>
    </ligand>
</feature>
<feature type="binding site" evidence="1">
    <location>
        <position position="161"/>
    </location>
    <ligand>
        <name>L-tyrosine</name>
        <dbReference type="ChEBI" id="CHEBI:58315"/>
    </ligand>
</feature>
<feature type="binding site" evidence="1">
    <location>
        <position position="176"/>
    </location>
    <ligand>
        <name>L-tyrosine</name>
        <dbReference type="ChEBI" id="CHEBI:58315"/>
    </ligand>
</feature>
<feature type="binding site" evidence="1">
    <location>
        <position position="215"/>
    </location>
    <ligand>
        <name>ATP</name>
        <dbReference type="ChEBI" id="CHEBI:30616"/>
    </ligand>
</feature>
<reference key="1">
    <citation type="journal article" date="2008" name="Genomics">
        <title>Evolution in the laboratory: the genome of Halobacterium salinarum strain R1 compared to that of strain NRC-1.</title>
        <authorList>
            <person name="Pfeiffer F."/>
            <person name="Schuster S.C."/>
            <person name="Broicher A."/>
            <person name="Falb M."/>
            <person name="Palm P."/>
            <person name="Rodewald K."/>
            <person name="Ruepp A."/>
            <person name="Soppa J."/>
            <person name="Tittor J."/>
            <person name="Oesterhelt D."/>
        </authorList>
    </citation>
    <scope>NUCLEOTIDE SEQUENCE [LARGE SCALE GENOMIC DNA]</scope>
    <source>
        <strain>ATCC 29341 / DSM 671 / R1</strain>
    </source>
</reference>
<gene>
    <name evidence="1" type="primary">tyrS</name>
    <name type="ordered locus">OE_4139R</name>
</gene>
<organism>
    <name type="scientific">Halobacterium salinarum (strain ATCC 29341 / DSM 671 / R1)</name>
    <dbReference type="NCBI Taxonomy" id="478009"/>
    <lineage>
        <taxon>Archaea</taxon>
        <taxon>Methanobacteriati</taxon>
        <taxon>Methanobacteriota</taxon>
        <taxon>Stenosarchaea group</taxon>
        <taxon>Halobacteria</taxon>
        <taxon>Halobacteriales</taxon>
        <taxon>Halobacteriaceae</taxon>
        <taxon>Halobacterium</taxon>
        <taxon>Halobacterium salinarum NRC-34001</taxon>
    </lineage>
</organism>
<name>SYY_HALS3</name>
<protein>
    <recommendedName>
        <fullName evidence="1">Tyrosine--tRNA ligase</fullName>
        <ecNumber evidence="1">6.1.1.1</ecNumber>
    </recommendedName>
    <alternativeName>
        <fullName evidence="1">Tyrosyl-tRNA synthetase</fullName>
        <shortName evidence="1">TyrRS</shortName>
    </alternativeName>
</protein>
<evidence type="ECO:0000255" key="1">
    <source>
        <dbReference type="HAMAP-Rule" id="MF_02008"/>
    </source>
</evidence>
<sequence length="327" mass="36423">MNAYERITRNTAEVVTEEEVRELAEDPEGKRVYVGYEPSGVLHLGHLLTANKLMDLQDAGMEVVVLLADVHAYLNDKGSFEEIRATADQMKAQFLAYGLDEDQTEFVLGSSFQLDEDYELDLHAMQVETSLKRAQRAMAEIQSGETPKVSHVVYPLMQALDIEYLDLDLAIGGMDQRKVHMLAREELPSVGYEKRPVLHTPIIGDLGSGDGKMSSSEGVTISMEDSTADIEEKVTGAFCPQTRDPEGETVNPVLELFQYHVFPRFDEVVVQRPDEYGGDLVYESYEDLADDLESGELHPADAKGALAAALDELIEPGRQRLREIRGE</sequence>
<proteinExistence type="inferred from homology"/>
<accession>B0R7E0</accession>
<dbReference type="EC" id="6.1.1.1" evidence="1"/>
<dbReference type="EMBL" id="AM774415">
    <property type="protein sequence ID" value="CAP14659.1"/>
    <property type="molecule type" value="Genomic_DNA"/>
</dbReference>
<dbReference type="RefSeq" id="WP_010903660.1">
    <property type="nucleotide sequence ID" value="NC_010364.1"/>
</dbReference>
<dbReference type="SMR" id="B0R7E0"/>
<dbReference type="EnsemblBacteria" id="CAP14659">
    <property type="protein sequence ID" value="CAP14659"/>
    <property type="gene ID" value="OE_4139R"/>
</dbReference>
<dbReference type="KEGG" id="hsl:OE_4139R"/>
<dbReference type="HOGENOM" id="CLU_035267_0_1_2"/>
<dbReference type="PhylomeDB" id="B0R7E0"/>
<dbReference type="Proteomes" id="UP000001321">
    <property type="component" value="Chromosome"/>
</dbReference>
<dbReference type="GO" id="GO:0005737">
    <property type="term" value="C:cytoplasm"/>
    <property type="evidence" value="ECO:0007669"/>
    <property type="project" value="UniProtKB-SubCell"/>
</dbReference>
<dbReference type="GO" id="GO:0005524">
    <property type="term" value="F:ATP binding"/>
    <property type="evidence" value="ECO:0007669"/>
    <property type="project" value="UniProtKB-UniRule"/>
</dbReference>
<dbReference type="GO" id="GO:0004831">
    <property type="term" value="F:tyrosine-tRNA ligase activity"/>
    <property type="evidence" value="ECO:0007669"/>
    <property type="project" value="UniProtKB-UniRule"/>
</dbReference>
<dbReference type="GO" id="GO:0006437">
    <property type="term" value="P:tyrosyl-tRNA aminoacylation"/>
    <property type="evidence" value="ECO:0007669"/>
    <property type="project" value="UniProtKB-UniRule"/>
</dbReference>
<dbReference type="CDD" id="cd00805">
    <property type="entry name" value="TyrRS_core"/>
    <property type="match status" value="1"/>
</dbReference>
<dbReference type="Gene3D" id="3.40.50.620">
    <property type="entry name" value="HUPs"/>
    <property type="match status" value="1"/>
</dbReference>
<dbReference type="Gene3D" id="1.10.240.10">
    <property type="entry name" value="Tyrosyl-Transfer RNA Synthetase"/>
    <property type="match status" value="1"/>
</dbReference>
<dbReference type="HAMAP" id="MF_02008">
    <property type="entry name" value="Tyr_tRNA_synth_type3"/>
    <property type="match status" value="1"/>
</dbReference>
<dbReference type="InterPro" id="IPR001412">
    <property type="entry name" value="aa-tRNA-synth_I_CS"/>
</dbReference>
<dbReference type="InterPro" id="IPR002305">
    <property type="entry name" value="aa-tRNA-synth_Ic"/>
</dbReference>
<dbReference type="InterPro" id="IPR014729">
    <property type="entry name" value="Rossmann-like_a/b/a_fold"/>
</dbReference>
<dbReference type="InterPro" id="IPR002307">
    <property type="entry name" value="Tyr-tRNA-ligase"/>
</dbReference>
<dbReference type="InterPro" id="IPR023684">
    <property type="entry name" value="Tyr-tRNA-ligase_3"/>
</dbReference>
<dbReference type="InterPro" id="IPR023617">
    <property type="entry name" value="Tyr-tRNA-ligase_arc/euk-type"/>
</dbReference>
<dbReference type="InterPro" id="IPR050489">
    <property type="entry name" value="Tyr-tRNA_synthase"/>
</dbReference>
<dbReference type="NCBIfam" id="NF006330">
    <property type="entry name" value="PRK08560.1"/>
    <property type="match status" value="1"/>
</dbReference>
<dbReference type="NCBIfam" id="TIGR00234">
    <property type="entry name" value="tyrS"/>
    <property type="match status" value="1"/>
</dbReference>
<dbReference type="PANTHER" id="PTHR46264:SF4">
    <property type="entry name" value="TYROSINE--TRNA LIGASE, CYTOPLASMIC"/>
    <property type="match status" value="1"/>
</dbReference>
<dbReference type="PANTHER" id="PTHR46264">
    <property type="entry name" value="TYROSINE-TRNA LIGASE"/>
    <property type="match status" value="1"/>
</dbReference>
<dbReference type="Pfam" id="PF00579">
    <property type="entry name" value="tRNA-synt_1b"/>
    <property type="match status" value="1"/>
</dbReference>
<dbReference type="PIRSF" id="PIRSF006588">
    <property type="entry name" value="TyrRS_arch_euk"/>
    <property type="match status" value="1"/>
</dbReference>
<dbReference type="PRINTS" id="PR01040">
    <property type="entry name" value="TRNASYNTHTYR"/>
</dbReference>
<dbReference type="SUPFAM" id="SSF52374">
    <property type="entry name" value="Nucleotidylyl transferase"/>
    <property type="match status" value="1"/>
</dbReference>
<dbReference type="PROSITE" id="PS00178">
    <property type="entry name" value="AA_TRNA_LIGASE_I"/>
    <property type="match status" value="1"/>
</dbReference>
<comment type="function">
    <text evidence="1">Catalyzes the attachment of tyrosine to tRNA(Tyr) in a two-step reaction: tyrosine is first activated by ATP to form Tyr-AMP and then transferred to the acceptor end of tRNA(Tyr).</text>
</comment>
<comment type="catalytic activity">
    <reaction evidence="1">
        <text>tRNA(Tyr) + L-tyrosine + ATP = L-tyrosyl-tRNA(Tyr) + AMP + diphosphate + H(+)</text>
        <dbReference type="Rhea" id="RHEA:10220"/>
        <dbReference type="Rhea" id="RHEA-COMP:9706"/>
        <dbReference type="Rhea" id="RHEA-COMP:9707"/>
        <dbReference type="ChEBI" id="CHEBI:15378"/>
        <dbReference type="ChEBI" id="CHEBI:30616"/>
        <dbReference type="ChEBI" id="CHEBI:33019"/>
        <dbReference type="ChEBI" id="CHEBI:58315"/>
        <dbReference type="ChEBI" id="CHEBI:78442"/>
        <dbReference type="ChEBI" id="CHEBI:78536"/>
        <dbReference type="ChEBI" id="CHEBI:456215"/>
        <dbReference type="EC" id="6.1.1.1"/>
    </reaction>
</comment>
<comment type="subunit">
    <text evidence="1">Homodimer.</text>
</comment>
<comment type="subcellular location">
    <subcellularLocation>
        <location evidence="1">Cytoplasm</location>
    </subcellularLocation>
</comment>
<comment type="similarity">
    <text evidence="1">Belongs to the class-I aminoacyl-tRNA synthetase family. TyrS type 3 subfamily.</text>
</comment>
<keyword id="KW-0030">Aminoacyl-tRNA synthetase</keyword>
<keyword id="KW-0067">ATP-binding</keyword>
<keyword id="KW-0963">Cytoplasm</keyword>
<keyword id="KW-0436">Ligase</keyword>
<keyword id="KW-0547">Nucleotide-binding</keyword>
<keyword id="KW-0648">Protein biosynthesis</keyword>